<evidence type="ECO:0000250" key="1"/>
<evidence type="ECO:0000256" key="2">
    <source>
        <dbReference type="SAM" id="MobiDB-lite"/>
    </source>
</evidence>
<evidence type="ECO:0000305" key="3"/>
<name>GLPX_MYCBT</name>
<gene>
    <name type="primary">glpX</name>
    <name type="ordered locus">JTY_1132</name>
</gene>
<protein>
    <recommendedName>
        <fullName>Fructose-1,6-bisphosphatase class 2</fullName>
        <shortName>FBPase class 2</shortName>
        <ecNumber>3.1.3.11</ecNumber>
    </recommendedName>
    <alternativeName>
        <fullName>D-fructose-1,6-bisphosphate 1-phosphohydrolase class 2</fullName>
    </alternativeName>
</protein>
<accession>C1AM93</accession>
<sequence>MTAEGSGSSTAAVASHDPSHTRPSRREAPDRNLAMELVRVTEAGAMAAGRWVGRGDKEGGDGAAVDAMRELVNSVSMRGVVVIGEGEKDHAPMLYNGEEVGNGDGPECDFAVDPIDGTTLMSKGMTNAISVLAVADRGTMFDPSAVFYMNKIAVGPDAAHVLDITAPISENIRAVAKVKDLSVRDMTVCILDRPRHAQLIHDVRATGARIRLITDGDVAGAISACRPHSGTDLLAGIGGTPEGIIAAAAIRCMGGAIQAQLAPRDDAERRKALEAGYDLNQVLTTEDLVSGENVFFCATGVTDGDLLKGVRYYPGGCTTHSIVMRSKSGTVRMIEAYHRLSKLNEYSAIDFTGDSSAVYPLP</sequence>
<comment type="function">
    <text evidence="1">Catalyzes the hydrolysis of fructose 1,6-bisphosphate to fructose 6-phosphate.</text>
</comment>
<comment type="catalytic activity">
    <reaction>
        <text>beta-D-fructose 1,6-bisphosphate + H2O = beta-D-fructose 6-phosphate + phosphate</text>
        <dbReference type="Rhea" id="RHEA:11064"/>
        <dbReference type="ChEBI" id="CHEBI:15377"/>
        <dbReference type="ChEBI" id="CHEBI:32966"/>
        <dbReference type="ChEBI" id="CHEBI:43474"/>
        <dbReference type="ChEBI" id="CHEBI:57634"/>
        <dbReference type="EC" id="3.1.3.11"/>
    </reaction>
</comment>
<comment type="cofactor">
    <cofactor evidence="1">
        <name>Mn(2+)</name>
        <dbReference type="ChEBI" id="CHEBI:29035"/>
    </cofactor>
</comment>
<comment type="pathway">
    <text>Carbohydrate biosynthesis; gluconeogenesis.</text>
</comment>
<comment type="subcellular location">
    <subcellularLocation>
        <location evidence="1">Cytoplasm</location>
    </subcellularLocation>
</comment>
<comment type="similarity">
    <text evidence="3">Belongs to the FBPase class 2 family.</text>
</comment>
<comment type="sequence caution" evidence="3">
    <conflict type="erroneous initiation">
        <sequence resource="EMBL-CDS" id="BAH25422"/>
    </conflict>
    <text>Truncated N-terminus.</text>
</comment>
<dbReference type="EC" id="3.1.3.11"/>
<dbReference type="EMBL" id="AP010918">
    <property type="protein sequence ID" value="BAH25422.1"/>
    <property type="status" value="ALT_INIT"/>
    <property type="molecule type" value="Genomic_DNA"/>
</dbReference>
<dbReference type="RefSeq" id="WP_003898726.1">
    <property type="nucleotide sequence ID" value="NZ_CP014566.1"/>
</dbReference>
<dbReference type="SMR" id="C1AM93"/>
<dbReference type="GeneID" id="45425073"/>
<dbReference type="KEGG" id="mbt:JTY_1132"/>
<dbReference type="HOGENOM" id="CLU_054938_0_0_11"/>
<dbReference type="UniPathway" id="UPA00138"/>
<dbReference type="GO" id="GO:0005829">
    <property type="term" value="C:cytosol"/>
    <property type="evidence" value="ECO:0007669"/>
    <property type="project" value="TreeGrafter"/>
</dbReference>
<dbReference type="GO" id="GO:0042132">
    <property type="term" value="F:fructose 1,6-bisphosphate 1-phosphatase activity"/>
    <property type="evidence" value="ECO:0007669"/>
    <property type="project" value="UniProtKB-EC"/>
</dbReference>
<dbReference type="GO" id="GO:0046872">
    <property type="term" value="F:metal ion binding"/>
    <property type="evidence" value="ECO:0007669"/>
    <property type="project" value="UniProtKB-KW"/>
</dbReference>
<dbReference type="GO" id="GO:0030388">
    <property type="term" value="P:fructose 1,6-bisphosphate metabolic process"/>
    <property type="evidence" value="ECO:0007669"/>
    <property type="project" value="TreeGrafter"/>
</dbReference>
<dbReference type="GO" id="GO:0006094">
    <property type="term" value="P:gluconeogenesis"/>
    <property type="evidence" value="ECO:0007669"/>
    <property type="project" value="UniProtKB-UniPathway"/>
</dbReference>
<dbReference type="GO" id="GO:0006071">
    <property type="term" value="P:glycerol metabolic process"/>
    <property type="evidence" value="ECO:0007669"/>
    <property type="project" value="InterPro"/>
</dbReference>
<dbReference type="CDD" id="cd01516">
    <property type="entry name" value="FBPase_glpX"/>
    <property type="match status" value="1"/>
</dbReference>
<dbReference type="FunFam" id="3.40.190.90:FF:000001">
    <property type="entry name" value="Fructose-1,6-bisphosphatase"/>
    <property type="match status" value="1"/>
</dbReference>
<dbReference type="Gene3D" id="3.40.190.90">
    <property type="match status" value="1"/>
</dbReference>
<dbReference type="Gene3D" id="3.30.540.10">
    <property type="entry name" value="Fructose-1,6-Bisphosphatase, subunit A, domain 1"/>
    <property type="match status" value="1"/>
</dbReference>
<dbReference type="InterPro" id="IPR004464">
    <property type="entry name" value="FBPase_class-2/SBPase"/>
</dbReference>
<dbReference type="NCBIfam" id="TIGR00330">
    <property type="entry name" value="glpX"/>
    <property type="match status" value="1"/>
</dbReference>
<dbReference type="PANTHER" id="PTHR30447:SF0">
    <property type="entry name" value="FRUCTOSE-1,6-BISPHOSPHATASE 1 CLASS 2-RELATED"/>
    <property type="match status" value="1"/>
</dbReference>
<dbReference type="PANTHER" id="PTHR30447">
    <property type="entry name" value="FRUCTOSE-1,6-BISPHOSPHATASE CLASS 2"/>
    <property type="match status" value="1"/>
</dbReference>
<dbReference type="Pfam" id="PF03320">
    <property type="entry name" value="FBPase_glpX"/>
    <property type="match status" value="1"/>
</dbReference>
<dbReference type="PIRSF" id="PIRSF004532">
    <property type="entry name" value="GlpX"/>
    <property type="match status" value="1"/>
</dbReference>
<dbReference type="SUPFAM" id="SSF56655">
    <property type="entry name" value="Carbohydrate phosphatase"/>
    <property type="match status" value="1"/>
</dbReference>
<proteinExistence type="inferred from homology"/>
<keyword id="KW-0119">Carbohydrate metabolism</keyword>
<keyword id="KW-0963">Cytoplasm</keyword>
<keyword id="KW-0378">Hydrolase</keyword>
<keyword id="KW-0464">Manganese</keyword>
<keyword id="KW-0479">Metal-binding</keyword>
<reference key="1">
    <citation type="journal article" date="2009" name="Vaccine">
        <title>Whole genome sequence analysis of Mycobacterium bovis bacillus Calmette-Guerin (BCG) Tokyo 172: a comparative study of BCG vaccine substrains.</title>
        <authorList>
            <person name="Seki M."/>
            <person name="Honda I."/>
            <person name="Fujita I."/>
            <person name="Yano I."/>
            <person name="Yamamoto S."/>
            <person name="Koyama A."/>
        </authorList>
    </citation>
    <scope>NUCLEOTIDE SEQUENCE [LARGE SCALE GENOMIC DNA]</scope>
    <source>
        <strain>BCG / Tokyo 172 / ATCC 35737 / TMC 1019</strain>
    </source>
</reference>
<organism>
    <name type="scientific">Mycobacterium bovis (strain BCG / Tokyo 172 / ATCC 35737 / TMC 1019)</name>
    <dbReference type="NCBI Taxonomy" id="561275"/>
    <lineage>
        <taxon>Bacteria</taxon>
        <taxon>Bacillati</taxon>
        <taxon>Actinomycetota</taxon>
        <taxon>Actinomycetes</taxon>
        <taxon>Mycobacteriales</taxon>
        <taxon>Mycobacteriaceae</taxon>
        <taxon>Mycobacterium</taxon>
        <taxon>Mycobacterium tuberculosis complex</taxon>
    </lineage>
</organism>
<feature type="chain" id="PRO_0000403676" description="Fructose-1,6-bisphosphatase class 2">
    <location>
        <begin position="1"/>
        <end position="362"/>
    </location>
</feature>
<feature type="region of interest" description="Disordered" evidence="2">
    <location>
        <begin position="1"/>
        <end position="32"/>
    </location>
</feature>
<feature type="compositionally biased region" description="Polar residues" evidence="2">
    <location>
        <begin position="1"/>
        <end position="12"/>
    </location>
</feature>
<feature type="compositionally biased region" description="Basic and acidic residues" evidence="2">
    <location>
        <begin position="17"/>
        <end position="30"/>
    </location>
</feature>
<feature type="binding site" evidence="1">
    <location>
        <position position="61"/>
    </location>
    <ligand>
        <name>Mn(2+)</name>
        <dbReference type="ChEBI" id="CHEBI:29035"/>
        <label>1</label>
    </ligand>
</feature>
<feature type="binding site" evidence="1">
    <location>
        <position position="85"/>
    </location>
    <ligand>
        <name>Mn(2+)</name>
        <dbReference type="ChEBI" id="CHEBI:29035"/>
        <label>1</label>
    </ligand>
</feature>
<feature type="binding site" evidence="1">
    <location>
        <position position="113"/>
    </location>
    <ligand>
        <name>Mn(2+)</name>
        <dbReference type="ChEBI" id="CHEBI:29035"/>
        <label>2</label>
    </ligand>
</feature>
<feature type="binding site" evidence="1">
    <location>
        <begin position="116"/>
        <end position="118"/>
    </location>
    <ligand>
        <name>substrate</name>
    </ligand>
</feature>
<feature type="binding site" evidence="1">
    <location>
        <position position="116"/>
    </location>
    <ligand>
        <name>Mn(2+)</name>
        <dbReference type="ChEBI" id="CHEBI:29035"/>
        <label>2</label>
    </ligand>
</feature>
<feature type="binding site" evidence="1">
    <location>
        <position position="148"/>
    </location>
    <ligand>
        <name>substrate</name>
    </ligand>
</feature>
<feature type="binding site" evidence="1">
    <location>
        <begin position="193"/>
        <end position="195"/>
    </location>
    <ligand>
        <name>substrate</name>
    </ligand>
</feature>
<feature type="binding site" evidence="1">
    <location>
        <begin position="215"/>
        <end position="217"/>
    </location>
    <ligand>
        <name>substrate</name>
    </ligand>
</feature>
<feature type="binding site" evidence="1">
    <location>
        <position position="239"/>
    </location>
    <ligand>
        <name>substrate</name>
    </ligand>
</feature>
<feature type="binding site" evidence="1">
    <location>
        <position position="242"/>
    </location>
    <ligand>
        <name>Mn(2+)</name>
        <dbReference type="ChEBI" id="CHEBI:29035"/>
        <label>2</label>
    </ligand>
</feature>